<sequence>MLRTCDITHIKNNYEAIIWKGERDCSTISTKYPNSAIFYKKRFIMLTPELGFAHSYNQQVKPLYTFCEKQRHLKNRKPLTILPSLSHKLQEMKFLPASDKSFESQYTEFLESFKILYREPLFLQIDGFIKDFRKWIKGEFNDFGDTRKIQLEPFQKNILIHVIFFIAVTKLPALANRVINYLTHVFDIEFVNESTLNTLKQKTNVFLVPRRHGKTWFIVPIISFLLKNIEGISIGYVAHQKHVSHFVMKEVEFKCRRMFPEKTITCLDNVITIDHQNIKSTALFASCYNTHQSIRGQSFNLLIVDESHFIKKDAFSTILGFLPQASTKILFISSTNSGNHSTSFLMKLNNSPFEMLSVVSYVCEDHAHMLNERGNATACSCYRLHKPKFISINAEVKKTANLFLEGAFIHEIMGGATCNVINDVLITEQGQTEFEFFRYSTINKNLIPFLGKDLYVYLDPAYTGNRRASGTGIAAIGTYLDQYIVYGMEHYFLESLMTSSDTAIAECAAHMILSILDLHPFFTEVKIIIEGNSNQASAVKIACIIKENITANKSIQVTFFHTPDQNQIAQPFYLLGKEKKLAVEFFISNFNSGNIKASQELISFTIKITYDPVEYALEQIRNIHQISVNNYITYSAKKQACSDDLIIAIIMAIYVCSGNSSASFREI</sequence>
<dbReference type="EC" id="3.1.-.-" evidence="1"/>
<dbReference type="EMBL" id="M68963">
    <property type="protein sequence ID" value="AAA65570.1"/>
    <property type="molecule type" value="Genomic_DNA"/>
</dbReference>
<dbReference type="EMBL" id="X83413">
    <property type="protein sequence ID" value="SPC53501.1"/>
    <property type="molecule type" value="Genomic_DNA"/>
</dbReference>
<dbReference type="PIR" id="A33560">
    <property type="entry name" value="QQBEH6"/>
</dbReference>
<dbReference type="SMR" id="P24443"/>
<dbReference type="Proteomes" id="UP000009295">
    <property type="component" value="Segment"/>
</dbReference>
<dbReference type="GO" id="GO:0042025">
    <property type="term" value="C:host cell nucleus"/>
    <property type="evidence" value="ECO:0007669"/>
    <property type="project" value="UniProtKB-SubCell"/>
</dbReference>
<dbReference type="GO" id="GO:0003677">
    <property type="term" value="F:DNA binding"/>
    <property type="evidence" value="ECO:0007669"/>
    <property type="project" value="UniProtKB-KW"/>
</dbReference>
<dbReference type="GO" id="GO:0016787">
    <property type="term" value="F:hydrolase activity"/>
    <property type="evidence" value="ECO:0007669"/>
    <property type="project" value="UniProtKB-KW"/>
</dbReference>
<dbReference type="GO" id="GO:0051276">
    <property type="term" value="P:chromosome organization"/>
    <property type="evidence" value="ECO:0007669"/>
    <property type="project" value="InterPro"/>
</dbReference>
<dbReference type="Gene3D" id="3.30.420.320">
    <property type="match status" value="1"/>
</dbReference>
<dbReference type="Gene3D" id="3.40.50.300">
    <property type="entry name" value="P-loop containing nucleotide triphosphate hydrolases"/>
    <property type="match status" value="1"/>
</dbReference>
<dbReference type="HAMAP" id="MF_04013">
    <property type="entry name" value="HSV_TRM3"/>
    <property type="match status" value="1"/>
</dbReference>
<dbReference type="InterPro" id="IPR003498">
    <property type="entry name" value="DNA_pack_C"/>
</dbReference>
<dbReference type="InterPro" id="IPR038435">
    <property type="entry name" value="DNA_pack_C_sf"/>
</dbReference>
<dbReference type="InterPro" id="IPR003499">
    <property type="entry name" value="DNA_pack_N"/>
</dbReference>
<dbReference type="InterPro" id="IPR033663">
    <property type="entry name" value="HSV_TRM3"/>
</dbReference>
<dbReference type="InterPro" id="IPR027417">
    <property type="entry name" value="P-loop_NTPase"/>
</dbReference>
<dbReference type="Pfam" id="PF02499">
    <property type="entry name" value="DNA_pack_C"/>
    <property type="match status" value="1"/>
</dbReference>
<dbReference type="Pfam" id="PF02500">
    <property type="entry name" value="DNA_pack_N"/>
    <property type="match status" value="1"/>
</dbReference>
<organism>
    <name type="scientific">Human herpesvirus 6A (strain Uganda-1102)</name>
    <name type="common">HHV-6 variant A</name>
    <name type="synonym">Human B lymphotropic virus</name>
    <dbReference type="NCBI Taxonomy" id="10370"/>
    <lineage>
        <taxon>Viruses</taxon>
        <taxon>Duplodnaviria</taxon>
        <taxon>Heunggongvirae</taxon>
        <taxon>Peploviricota</taxon>
        <taxon>Herviviricetes</taxon>
        <taxon>Herpesvirales</taxon>
        <taxon>Orthoherpesviridae</taxon>
        <taxon>Betaherpesvirinae</taxon>
        <taxon>Roseolovirus</taxon>
        <taxon>Roseolovirus humanbeta6a</taxon>
        <taxon>Human betaherpesvirus 6A</taxon>
    </lineage>
</organism>
<feature type="chain" id="PRO_0000115941" description="Tripartite terminase subunit 3">
    <location>
        <begin position="1"/>
        <end position="667"/>
    </location>
</feature>
<feature type="short sequence motif" description="Walker A motif" evidence="1">
    <location>
        <begin position="208"/>
        <end position="215"/>
    </location>
</feature>
<feature type="short sequence motif" description="Walker B motif" evidence="1">
    <location>
        <begin position="301"/>
        <end position="306"/>
    </location>
</feature>
<feature type="active site" description="For ATPase activity" evidence="1">
    <location>
        <position position="306"/>
    </location>
</feature>
<feature type="active site" description="For nuclease activity" evidence="1">
    <location>
        <position position="459"/>
    </location>
</feature>
<feature type="active site" description="For nuclease activity" evidence="1">
    <location>
        <position position="530"/>
    </location>
</feature>
<feature type="active site" description="For nuclease activity" evidence="1">
    <location>
        <position position="644"/>
    </location>
</feature>
<feature type="sequence conflict" description="In Ref. 2; SPC53501." evidence="2" ref="2">
    <location>
        <position position="292"/>
    </location>
</feature>
<keyword id="KW-0238">DNA-binding</keyword>
<keyword id="KW-1048">Host nucleus</keyword>
<keyword id="KW-0378">Hydrolase</keyword>
<keyword id="KW-1185">Reference proteome</keyword>
<keyword id="KW-0231">Viral genome packaging</keyword>
<keyword id="KW-1188">Viral release from host cell</keyword>
<reference key="1">
    <citation type="journal article" date="1990" name="J. Virol.">
        <title>Human herpesvirus 6 is closely related to human cytomegalovirus.</title>
        <authorList>
            <person name="Lawrence G.L."/>
            <person name="Chee M."/>
            <person name="Craxton M.A."/>
            <person name="Gompels U.A."/>
            <person name="Honess R.W."/>
            <person name="Barrell B.G."/>
        </authorList>
    </citation>
    <scope>NUCLEOTIDE SEQUENCE [GENOMIC DNA]</scope>
</reference>
<reference key="2">
    <citation type="journal article" date="1995" name="Virology">
        <title>The DNA sequence of human herpesvirus-6: structure, coding content, and genome evolution.</title>
        <authorList>
            <person name="Gompels U.A."/>
            <person name="Nicholas J."/>
            <person name="Lawrence G.L."/>
            <person name="Jones M."/>
            <person name="Thomson B.J."/>
            <person name="Martin M.E.D."/>
            <person name="Efstathiou S."/>
            <person name="Craxton M.A."/>
            <person name="Macaulay H.A."/>
        </authorList>
    </citation>
    <scope>NUCLEOTIDE SEQUENCE [LARGE SCALE GENOMIC DNA]</scope>
</reference>
<name>TRM3_HHV6U</name>
<gene>
    <name evidence="1" type="primary">TRM3</name>
    <name type="ordered locus">12L/7L</name>
    <name type="ordered locus">U60/66</name>
</gene>
<comment type="function">
    <text evidence="1">Component of the molecular motor that translocates viral genomic DNA in empty capsid during DNA packaging. Forms a tripartite terminase complex together with TRM1 and TRM2 in the host cytoplasm. Once the complex reaches the host nucleus, it interacts with the capsid portal vertex. This portal forms a ring in which genomic DNA is translocated into the capsid. TRM3 carries an RNase H-like nuclease activity that plays an important role for the cleavage of concatemeric viral DNA into unit length genomes.</text>
</comment>
<comment type="subunit">
    <text evidence="1">Interacts with the terminase subunits TRM1 and TRM2. Interacts with portal protein.</text>
</comment>
<comment type="subcellular location">
    <subcellularLocation>
        <location evidence="1">Host nucleus</location>
    </subcellularLocation>
    <text evidence="1">Responsible for the nuclear localization of the two others subunits TRM1 and TRM2.</text>
</comment>
<comment type="similarity">
    <text evidence="1">Belongs to the herpesviridae TRM3 protein family.</text>
</comment>
<proteinExistence type="inferred from homology"/>
<protein>
    <recommendedName>
        <fullName evidence="1">Tripartite terminase subunit 3</fullName>
        <ecNumber evidence="1">3.1.-.-</ecNumber>
    </recommendedName>
    <alternativeName>
        <fullName evidence="1">Terminase large subunit</fullName>
    </alternativeName>
</protein>
<evidence type="ECO:0000255" key="1">
    <source>
        <dbReference type="HAMAP-Rule" id="MF_04013"/>
    </source>
</evidence>
<evidence type="ECO:0000305" key="2"/>
<organismHost>
    <name type="scientific">Homo sapiens</name>
    <name type="common">Human</name>
    <dbReference type="NCBI Taxonomy" id="9606"/>
</organismHost>
<accession>P24443</accession>
<accession>A0A2N9DYY6</accession>